<proteinExistence type="inferred from homology"/>
<feature type="chain" id="PRO_1000193905" description="Large ribosomal subunit protein bL19">
    <location>
        <begin position="1"/>
        <end position="120"/>
    </location>
</feature>
<keyword id="KW-1185">Reference proteome</keyword>
<keyword id="KW-0687">Ribonucleoprotein</keyword>
<keyword id="KW-0689">Ribosomal protein</keyword>
<comment type="function">
    <text evidence="1">This protein is located at the 30S-50S ribosomal subunit interface and may play a role in the structure and function of the aminoacyl-tRNA binding site.</text>
</comment>
<comment type="similarity">
    <text evidence="1">Belongs to the bacterial ribosomal protein bL19 family.</text>
</comment>
<sequence>MNAEAIIRSIEAEQLKDDLPTIHVGDTVRVGVKIKEGTKERVQPYEGTVIAMRNGGINETITVRKIFQGIGVERVFLLHSPLVDNIKVIRRGKVRRAKLYYLRDRVGKATRIKQRFDRPI</sequence>
<protein>
    <recommendedName>
        <fullName evidence="1">Large ribosomal subunit protein bL19</fullName>
    </recommendedName>
    <alternativeName>
        <fullName evidence="2">50S ribosomal protein L19</fullName>
    </alternativeName>
</protein>
<organism>
    <name type="scientific">Picosynechococcus sp. (strain ATCC 27264 / PCC 7002 / PR-6)</name>
    <name type="common">Agmenellum quadruplicatum</name>
    <dbReference type="NCBI Taxonomy" id="32049"/>
    <lineage>
        <taxon>Bacteria</taxon>
        <taxon>Bacillati</taxon>
        <taxon>Cyanobacteriota</taxon>
        <taxon>Cyanophyceae</taxon>
        <taxon>Oscillatoriophycideae</taxon>
        <taxon>Chroococcales</taxon>
        <taxon>Geminocystaceae</taxon>
        <taxon>Picosynechococcus</taxon>
    </lineage>
</organism>
<reference key="1">
    <citation type="submission" date="2008-02" db="EMBL/GenBank/DDBJ databases">
        <title>Complete sequence of Synechococcus sp. PCC 7002.</title>
        <authorList>
            <person name="Li T."/>
            <person name="Zhao J."/>
            <person name="Zhao C."/>
            <person name="Liu Z."/>
            <person name="Zhao F."/>
            <person name="Marquardt J."/>
            <person name="Nomura C.T."/>
            <person name="Persson S."/>
            <person name="Detter J.C."/>
            <person name="Richardson P.M."/>
            <person name="Lanz C."/>
            <person name="Schuster S.C."/>
            <person name="Wang J."/>
            <person name="Li S."/>
            <person name="Huang X."/>
            <person name="Cai T."/>
            <person name="Yu Z."/>
            <person name="Luo J."/>
            <person name="Zhao J."/>
            <person name="Bryant D.A."/>
        </authorList>
    </citation>
    <scope>NUCLEOTIDE SEQUENCE [LARGE SCALE GENOMIC DNA]</scope>
    <source>
        <strain>ATCC 27264 / PCC 7002 / PR-6</strain>
    </source>
</reference>
<evidence type="ECO:0000255" key="1">
    <source>
        <dbReference type="HAMAP-Rule" id="MF_00402"/>
    </source>
</evidence>
<evidence type="ECO:0000305" key="2"/>
<gene>
    <name evidence="1" type="primary">rplS</name>
    <name evidence="1" type="synonym">rpl19</name>
    <name type="ordered locus">SYNPCC7002_A1033</name>
</gene>
<name>RL19_PICP2</name>
<dbReference type="EMBL" id="CP000951">
    <property type="protein sequence ID" value="ACA99035.1"/>
    <property type="molecule type" value="Genomic_DNA"/>
</dbReference>
<dbReference type="RefSeq" id="WP_012306659.1">
    <property type="nucleotide sequence ID" value="NZ_JAHHPU010000001.1"/>
</dbReference>
<dbReference type="SMR" id="B1XJH5"/>
<dbReference type="STRING" id="32049.SYNPCC7002_A1033"/>
<dbReference type="KEGG" id="syp:SYNPCC7002_A1033"/>
<dbReference type="eggNOG" id="COG0335">
    <property type="taxonomic scope" value="Bacteria"/>
</dbReference>
<dbReference type="HOGENOM" id="CLU_103507_2_0_3"/>
<dbReference type="Proteomes" id="UP000001688">
    <property type="component" value="Chromosome"/>
</dbReference>
<dbReference type="GO" id="GO:0022625">
    <property type="term" value="C:cytosolic large ribosomal subunit"/>
    <property type="evidence" value="ECO:0007669"/>
    <property type="project" value="TreeGrafter"/>
</dbReference>
<dbReference type="GO" id="GO:0003735">
    <property type="term" value="F:structural constituent of ribosome"/>
    <property type="evidence" value="ECO:0007669"/>
    <property type="project" value="InterPro"/>
</dbReference>
<dbReference type="GO" id="GO:0006412">
    <property type="term" value="P:translation"/>
    <property type="evidence" value="ECO:0007669"/>
    <property type="project" value="UniProtKB-UniRule"/>
</dbReference>
<dbReference type="FunFam" id="2.30.30.790:FF:000001">
    <property type="entry name" value="50S ribosomal protein L19"/>
    <property type="match status" value="1"/>
</dbReference>
<dbReference type="Gene3D" id="2.30.30.790">
    <property type="match status" value="1"/>
</dbReference>
<dbReference type="HAMAP" id="MF_00402">
    <property type="entry name" value="Ribosomal_bL19"/>
    <property type="match status" value="1"/>
</dbReference>
<dbReference type="InterPro" id="IPR001857">
    <property type="entry name" value="Ribosomal_bL19"/>
</dbReference>
<dbReference type="InterPro" id="IPR018257">
    <property type="entry name" value="Ribosomal_bL19_CS"/>
</dbReference>
<dbReference type="InterPro" id="IPR038657">
    <property type="entry name" value="Ribosomal_bL19_sf"/>
</dbReference>
<dbReference type="InterPro" id="IPR008991">
    <property type="entry name" value="Translation_prot_SH3-like_sf"/>
</dbReference>
<dbReference type="NCBIfam" id="TIGR01024">
    <property type="entry name" value="rplS_bact"/>
    <property type="match status" value="1"/>
</dbReference>
<dbReference type="PANTHER" id="PTHR15680:SF9">
    <property type="entry name" value="LARGE RIBOSOMAL SUBUNIT PROTEIN BL19M"/>
    <property type="match status" value="1"/>
</dbReference>
<dbReference type="PANTHER" id="PTHR15680">
    <property type="entry name" value="RIBOSOMAL PROTEIN L19"/>
    <property type="match status" value="1"/>
</dbReference>
<dbReference type="Pfam" id="PF01245">
    <property type="entry name" value="Ribosomal_L19"/>
    <property type="match status" value="1"/>
</dbReference>
<dbReference type="PIRSF" id="PIRSF002191">
    <property type="entry name" value="Ribosomal_L19"/>
    <property type="match status" value="1"/>
</dbReference>
<dbReference type="PRINTS" id="PR00061">
    <property type="entry name" value="RIBOSOMALL19"/>
</dbReference>
<dbReference type="SUPFAM" id="SSF50104">
    <property type="entry name" value="Translation proteins SH3-like domain"/>
    <property type="match status" value="1"/>
</dbReference>
<dbReference type="PROSITE" id="PS01015">
    <property type="entry name" value="RIBOSOMAL_L19"/>
    <property type="match status" value="1"/>
</dbReference>
<accession>B1XJH5</accession>